<reference key="1">
    <citation type="journal article" date="1997" name="Exp. Dermatol.">
        <title>Isolation of a cDNA encoding a tyrosine kinase expressed in murine skin.</title>
        <authorList>
            <person name="Kawachi Y."/>
            <person name="Nakauchi H."/>
            <person name="Otsuka F."/>
        </authorList>
    </citation>
    <scope>NUCLEOTIDE SEQUENCE [MRNA]</scope>
    <scope>TISSUE SPECIFICITY</scope>
    <source>
        <strain>C57BL/6J</strain>
        <tissue>Thymus</tissue>
    </source>
</reference>
<reference key="2">
    <citation type="journal article" date="1994" name="Mol. Cell. Biol.">
        <title>A novel nonreceptor tyrosine kinase, Srm: cloning and targeted disruption.</title>
        <authorList>
            <person name="Kohmura N."/>
            <person name="Yagi T."/>
            <person name="Tomooka Y."/>
            <person name="Oyanagi M."/>
            <person name="Kominami R."/>
            <person name="Takeda N."/>
            <person name="Chiba J."/>
            <person name="Ikawa Y."/>
            <person name="Aizawa S."/>
        </authorList>
    </citation>
    <scope>NUCLEOTIDE SEQUENCE [MRNA]</scope>
    <scope>TISSUE SPECIFICITY</scope>
    <scope>DEVELOPMENTAL STAGE</scope>
    <scope>DISRUPTION PHENOTYPE</scope>
    <source>
        <tissue>Lung</tissue>
    </source>
</reference>
<reference key="3">
    <citation type="journal article" date="2009" name="PLoS Biol.">
        <title>Lineage-specific biology revealed by a finished genome assembly of the mouse.</title>
        <authorList>
            <person name="Church D.M."/>
            <person name="Goodstadt L."/>
            <person name="Hillier L.W."/>
            <person name="Zody M.C."/>
            <person name="Goldstein S."/>
            <person name="She X."/>
            <person name="Bult C.J."/>
            <person name="Agarwala R."/>
            <person name="Cherry J.L."/>
            <person name="DiCuccio M."/>
            <person name="Hlavina W."/>
            <person name="Kapustin Y."/>
            <person name="Meric P."/>
            <person name="Maglott D."/>
            <person name="Birtle Z."/>
            <person name="Marques A.C."/>
            <person name="Graves T."/>
            <person name="Zhou S."/>
            <person name="Teague B."/>
            <person name="Potamousis K."/>
            <person name="Churas C."/>
            <person name="Place M."/>
            <person name="Herschleb J."/>
            <person name="Runnheim R."/>
            <person name="Forrest D."/>
            <person name="Amos-Landgraf J."/>
            <person name="Schwartz D.C."/>
            <person name="Cheng Z."/>
            <person name="Lindblad-Toh K."/>
            <person name="Eichler E.E."/>
            <person name="Ponting C.P."/>
        </authorList>
    </citation>
    <scope>NUCLEOTIDE SEQUENCE [LARGE SCALE GENOMIC DNA]</scope>
    <source>
        <strain>C57BL/6J</strain>
    </source>
</reference>
<organism>
    <name type="scientific">Mus musculus</name>
    <name type="common">Mouse</name>
    <dbReference type="NCBI Taxonomy" id="10090"/>
    <lineage>
        <taxon>Eukaryota</taxon>
        <taxon>Metazoa</taxon>
        <taxon>Chordata</taxon>
        <taxon>Craniata</taxon>
        <taxon>Vertebrata</taxon>
        <taxon>Euteleostomi</taxon>
        <taxon>Mammalia</taxon>
        <taxon>Eutheria</taxon>
        <taxon>Euarchontoglires</taxon>
        <taxon>Glires</taxon>
        <taxon>Rodentia</taxon>
        <taxon>Myomorpha</taxon>
        <taxon>Muroidea</taxon>
        <taxon>Muridae</taxon>
        <taxon>Murinae</taxon>
        <taxon>Mus</taxon>
        <taxon>Mus</taxon>
    </lineage>
</organism>
<keyword id="KW-0067">ATP-binding</keyword>
<keyword id="KW-0963">Cytoplasm</keyword>
<keyword id="KW-0418">Kinase</keyword>
<keyword id="KW-0547">Nucleotide-binding</keyword>
<keyword id="KW-0597">Phosphoprotein</keyword>
<keyword id="KW-1185">Reference proteome</keyword>
<keyword id="KW-0727">SH2 domain</keyword>
<keyword id="KW-0728">SH3 domain</keyword>
<keyword id="KW-0808">Transferase</keyword>
<keyword id="KW-0829">Tyrosine-protein kinase</keyword>
<protein>
    <recommendedName>
        <fullName>Tyrosine-protein kinase Srms</fullName>
        <ecNumber evidence="1">2.7.10.2</ecNumber>
    </recommendedName>
    <alternativeName>
        <fullName>PTK70</fullName>
    </alternativeName>
</protein>
<accession>Q62270</accession>
<accession>Q62360</accession>
<accession>Q923M5</accession>
<name>SRMS_MOUSE</name>
<dbReference type="EC" id="2.7.10.2" evidence="1"/>
<dbReference type="EMBL" id="D49427">
    <property type="protein sequence ID" value="BAA08406.1"/>
    <property type="molecule type" value="mRNA"/>
</dbReference>
<dbReference type="EMBL" id="D26186">
    <property type="protein sequence ID" value="BAA05331.1"/>
    <property type="molecule type" value="mRNA"/>
</dbReference>
<dbReference type="EMBL" id="AL450341">
    <property type="status" value="NOT_ANNOTATED_CDS"/>
    <property type="molecule type" value="Genomic_DNA"/>
</dbReference>
<dbReference type="CCDS" id="CCDS17204.1"/>
<dbReference type="PIR" id="A56040">
    <property type="entry name" value="A56040"/>
</dbReference>
<dbReference type="SMR" id="Q62270"/>
<dbReference type="FunCoup" id="Q62270">
    <property type="interactions" value="8"/>
</dbReference>
<dbReference type="STRING" id="10090.ENSMUSP00000016498"/>
<dbReference type="iPTMnet" id="Q62270"/>
<dbReference type="PhosphoSitePlus" id="Q62270"/>
<dbReference type="PaxDb" id="10090-ENSMUSP00000016498"/>
<dbReference type="ProteomicsDB" id="254560"/>
<dbReference type="AGR" id="MGI:101865"/>
<dbReference type="MGI" id="MGI:101865">
    <property type="gene designation" value="Srms"/>
</dbReference>
<dbReference type="eggNOG" id="KOG0197">
    <property type="taxonomic scope" value="Eukaryota"/>
</dbReference>
<dbReference type="InParanoid" id="Q62270"/>
<dbReference type="BRENDA" id="2.7.10.2">
    <property type="organism ID" value="3474"/>
</dbReference>
<dbReference type="Reactome" id="R-MMU-8849472">
    <property type="pathway name" value="PTK6 Down-Regulation"/>
</dbReference>
<dbReference type="ChiTaRS" id="Srm">
    <property type="organism name" value="mouse"/>
</dbReference>
<dbReference type="PRO" id="PR:Q62270"/>
<dbReference type="Proteomes" id="UP000000589">
    <property type="component" value="Unplaced"/>
</dbReference>
<dbReference type="RNAct" id="Q62270">
    <property type="molecule type" value="protein"/>
</dbReference>
<dbReference type="GO" id="GO:0005737">
    <property type="term" value="C:cytoplasm"/>
    <property type="evidence" value="ECO:0000250"/>
    <property type="project" value="UniProtKB"/>
</dbReference>
<dbReference type="GO" id="GO:0005524">
    <property type="term" value="F:ATP binding"/>
    <property type="evidence" value="ECO:0007669"/>
    <property type="project" value="UniProtKB-KW"/>
</dbReference>
<dbReference type="GO" id="GO:0004715">
    <property type="term" value="F:non-membrane spanning protein tyrosine kinase activity"/>
    <property type="evidence" value="ECO:0007669"/>
    <property type="project" value="UniProtKB-EC"/>
</dbReference>
<dbReference type="GO" id="GO:0004713">
    <property type="term" value="F:protein tyrosine kinase activity"/>
    <property type="evidence" value="ECO:0000250"/>
    <property type="project" value="UniProtKB"/>
</dbReference>
<dbReference type="GO" id="GO:0038083">
    <property type="term" value="P:peptidyl-tyrosine autophosphorylation"/>
    <property type="evidence" value="ECO:0000250"/>
    <property type="project" value="UniProtKB"/>
</dbReference>
<dbReference type="GO" id="GO:1904263">
    <property type="term" value="P:positive regulation of TORC1 signaling"/>
    <property type="evidence" value="ECO:0007669"/>
    <property type="project" value="Ensembl"/>
</dbReference>
<dbReference type="CDD" id="cd05148">
    <property type="entry name" value="PTKc_Srm_Brk"/>
    <property type="match status" value="1"/>
</dbReference>
<dbReference type="CDD" id="cd10360">
    <property type="entry name" value="SH2_Srm"/>
    <property type="match status" value="1"/>
</dbReference>
<dbReference type="FunFam" id="1.10.510.10:FF:000458">
    <property type="entry name" value="Tyrosine-protein kinase"/>
    <property type="match status" value="1"/>
</dbReference>
<dbReference type="FunFam" id="2.30.30.40:FF:000234">
    <property type="entry name" value="Tyrosine-protein kinase"/>
    <property type="match status" value="1"/>
</dbReference>
<dbReference type="FunFam" id="3.30.200.20:FF:000053">
    <property type="entry name" value="Tyrosine-protein kinase"/>
    <property type="match status" value="1"/>
</dbReference>
<dbReference type="FunFam" id="3.30.505.10:FF:000078">
    <property type="entry name" value="Tyrosine-protein kinase"/>
    <property type="match status" value="1"/>
</dbReference>
<dbReference type="Gene3D" id="3.30.505.10">
    <property type="entry name" value="SH2 domain"/>
    <property type="match status" value="1"/>
</dbReference>
<dbReference type="Gene3D" id="2.30.30.40">
    <property type="entry name" value="SH3 Domains"/>
    <property type="match status" value="1"/>
</dbReference>
<dbReference type="Gene3D" id="1.10.510.10">
    <property type="entry name" value="Transferase(Phosphotransferase) domain 1"/>
    <property type="match status" value="1"/>
</dbReference>
<dbReference type="InterPro" id="IPR011009">
    <property type="entry name" value="Kinase-like_dom_sf"/>
</dbReference>
<dbReference type="InterPro" id="IPR050198">
    <property type="entry name" value="Non-receptor_tyrosine_kinases"/>
</dbReference>
<dbReference type="InterPro" id="IPR000719">
    <property type="entry name" value="Prot_kinase_dom"/>
</dbReference>
<dbReference type="InterPro" id="IPR017441">
    <property type="entry name" value="Protein_kinase_ATP_BS"/>
</dbReference>
<dbReference type="InterPro" id="IPR001245">
    <property type="entry name" value="Ser-Thr/Tyr_kinase_cat_dom"/>
</dbReference>
<dbReference type="InterPro" id="IPR000980">
    <property type="entry name" value="SH2"/>
</dbReference>
<dbReference type="InterPro" id="IPR036860">
    <property type="entry name" value="SH2_dom_sf"/>
</dbReference>
<dbReference type="InterPro" id="IPR036028">
    <property type="entry name" value="SH3-like_dom_sf"/>
</dbReference>
<dbReference type="InterPro" id="IPR001452">
    <property type="entry name" value="SH3_domain"/>
</dbReference>
<dbReference type="InterPro" id="IPR008266">
    <property type="entry name" value="Tyr_kinase_AS"/>
</dbReference>
<dbReference type="InterPro" id="IPR020635">
    <property type="entry name" value="Tyr_kinase_cat_dom"/>
</dbReference>
<dbReference type="PANTHER" id="PTHR24418">
    <property type="entry name" value="TYROSINE-PROTEIN KINASE"/>
    <property type="match status" value="1"/>
</dbReference>
<dbReference type="Pfam" id="PF07714">
    <property type="entry name" value="PK_Tyr_Ser-Thr"/>
    <property type="match status" value="1"/>
</dbReference>
<dbReference type="Pfam" id="PF00017">
    <property type="entry name" value="SH2"/>
    <property type="match status" value="1"/>
</dbReference>
<dbReference type="Pfam" id="PF14604">
    <property type="entry name" value="SH3_9"/>
    <property type="match status" value="1"/>
</dbReference>
<dbReference type="PRINTS" id="PR00401">
    <property type="entry name" value="SH2DOMAIN"/>
</dbReference>
<dbReference type="PRINTS" id="PR00452">
    <property type="entry name" value="SH3DOMAIN"/>
</dbReference>
<dbReference type="PRINTS" id="PR00109">
    <property type="entry name" value="TYRKINASE"/>
</dbReference>
<dbReference type="SMART" id="SM00252">
    <property type="entry name" value="SH2"/>
    <property type="match status" value="1"/>
</dbReference>
<dbReference type="SMART" id="SM00326">
    <property type="entry name" value="SH3"/>
    <property type="match status" value="1"/>
</dbReference>
<dbReference type="SMART" id="SM00219">
    <property type="entry name" value="TyrKc"/>
    <property type="match status" value="1"/>
</dbReference>
<dbReference type="SUPFAM" id="SSF56112">
    <property type="entry name" value="Protein kinase-like (PK-like)"/>
    <property type="match status" value="1"/>
</dbReference>
<dbReference type="SUPFAM" id="SSF55550">
    <property type="entry name" value="SH2 domain"/>
    <property type="match status" value="1"/>
</dbReference>
<dbReference type="SUPFAM" id="SSF50044">
    <property type="entry name" value="SH3-domain"/>
    <property type="match status" value="1"/>
</dbReference>
<dbReference type="PROSITE" id="PS00107">
    <property type="entry name" value="PROTEIN_KINASE_ATP"/>
    <property type="match status" value="1"/>
</dbReference>
<dbReference type="PROSITE" id="PS50011">
    <property type="entry name" value="PROTEIN_KINASE_DOM"/>
    <property type="match status" value="1"/>
</dbReference>
<dbReference type="PROSITE" id="PS00109">
    <property type="entry name" value="PROTEIN_KINASE_TYR"/>
    <property type="match status" value="1"/>
</dbReference>
<dbReference type="PROSITE" id="PS50001">
    <property type="entry name" value="SH2"/>
    <property type="match status" value="1"/>
</dbReference>
<dbReference type="PROSITE" id="PS50002">
    <property type="entry name" value="SH3"/>
    <property type="match status" value="1"/>
</dbReference>
<feature type="chain" id="PRO_0000088161" description="Tyrosine-protein kinase Srms">
    <location>
        <begin position="1"/>
        <end position="496"/>
    </location>
</feature>
<feature type="domain" description="SH3" evidence="4">
    <location>
        <begin position="55"/>
        <end position="116"/>
    </location>
</feature>
<feature type="domain" description="SH2" evidence="3">
    <location>
        <begin position="124"/>
        <end position="216"/>
    </location>
</feature>
<feature type="domain" description="Protein kinase" evidence="2">
    <location>
        <begin position="234"/>
        <end position="495"/>
    </location>
</feature>
<feature type="active site" description="Proton acceptor" evidence="2 5">
    <location>
        <position position="354"/>
    </location>
</feature>
<feature type="binding site" evidence="2">
    <location>
        <begin position="240"/>
        <end position="248"/>
    </location>
    <ligand>
        <name>ATP</name>
        <dbReference type="ChEBI" id="CHEBI:30616"/>
    </ligand>
</feature>
<feature type="binding site" evidence="2">
    <location>
        <position position="262"/>
    </location>
    <ligand>
        <name>ATP</name>
        <dbReference type="ChEBI" id="CHEBI:30616"/>
    </ligand>
</feature>
<feature type="modified residue" description="Phosphotyrosine; by autocatalysis" evidence="1">
    <location>
        <position position="384"/>
    </location>
</feature>
<feature type="sequence conflict" description="In Ref. 2; BAA05331." evidence="8" ref="2">
    <original>R</original>
    <variation>G</variation>
    <location>
        <position position="78"/>
    </location>
</feature>
<feature type="sequence conflict" description="In Ref. 2; BAA05331." evidence="8" ref="2">
    <original>LR</original>
    <variation>FG</variation>
    <location>
        <begin position="236"/>
        <end position="237"/>
    </location>
</feature>
<feature type="sequence conflict" description="In Ref. 1; BAA08406." evidence="8" ref="1">
    <original>R</original>
    <variation>K</variation>
    <location>
        <position position="238"/>
    </location>
</feature>
<feature type="sequence conflict" description="In Ref. 1; BAA08406." evidence="8" ref="1">
    <original>I</original>
    <variation>N</variation>
    <location>
        <position position="278"/>
    </location>
</feature>
<evidence type="ECO:0000250" key="1">
    <source>
        <dbReference type="UniProtKB" id="Q9H3Y6"/>
    </source>
</evidence>
<evidence type="ECO:0000255" key="2">
    <source>
        <dbReference type="PROSITE-ProRule" id="PRU00159"/>
    </source>
</evidence>
<evidence type="ECO:0000255" key="3">
    <source>
        <dbReference type="PROSITE-ProRule" id="PRU00191"/>
    </source>
</evidence>
<evidence type="ECO:0000255" key="4">
    <source>
        <dbReference type="PROSITE-ProRule" id="PRU00192"/>
    </source>
</evidence>
<evidence type="ECO:0000255" key="5">
    <source>
        <dbReference type="PROSITE-ProRule" id="PRU10028"/>
    </source>
</evidence>
<evidence type="ECO:0000269" key="6">
    <source>
    </source>
</evidence>
<evidence type="ECO:0000269" key="7">
    <source>
    </source>
</evidence>
<evidence type="ECO:0000305" key="8"/>
<proteinExistence type="evidence at transcript level"/>
<comment type="function">
    <text evidence="1">Non-receptor tyrosine-protein kinase which phosphorylates DOK1 on tyrosine residues. Also phosphorylates KHDRBS1/SAM68 and VIM on tyrosine residues. Phosphorylation of KHDRBS1 is EGF-dependent. Phosphorylates OTUB1, promoting deubiquitination of RPTOR.</text>
</comment>
<comment type="catalytic activity">
    <reaction evidence="5">
        <text>L-tyrosyl-[protein] + ATP = O-phospho-L-tyrosyl-[protein] + ADP + H(+)</text>
        <dbReference type="Rhea" id="RHEA:10596"/>
        <dbReference type="Rhea" id="RHEA-COMP:10136"/>
        <dbReference type="Rhea" id="RHEA-COMP:20101"/>
        <dbReference type="ChEBI" id="CHEBI:15378"/>
        <dbReference type="ChEBI" id="CHEBI:30616"/>
        <dbReference type="ChEBI" id="CHEBI:46858"/>
        <dbReference type="ChEBI" id="CHEBI:61978"/>
        <dbReference type="ChEBI" id="CHEBI:456216"/>
        <dbReference type="EC" id="2.7.10.2"/>
    </reaction>
</comment>
<comment type="subunit">
    <text evidence="1">Interacts (via the SH2 and SH3 domains) with DOK1. Interacts with KHDRBS1/SAM68 and VIM.</text>
</comment>
<comment type="subcellular location">
    <subcellularLocation>
        <location evidence="1">Cytoplasm</location>
    </subcellularLocation>
    <text evidence="1">Localizes to punctate cytoplasmic structures.</text>
</comment>
<comment type="tissue specificity">
    <text evidence="6 7">Higher expression in liver, lung, thymus and skin than in brain, kidney, heart and spleen (PubMed:9226137). In skin, highly expressed in keratinocytes (PubMed:9226137). Abundant in lung, liver, spleen, kidney and testis and is also detected in the cerebrum (PubMed:7935409).</text>
</comment>
<comment type="developmental stage">
    <text evidence="6">In the brain, expression is low at 11 dpc with higher levels detected in 15 dpc and postnatal brain. Expressed at low levels in adult brain.</text>
</comment>
<comment type="domain">
    <text evidence="1">The N-terminal region regulates its kinase activity.</text>
</comment>
<comment type="disruption phenotype">
    <text evidence="6">No visible phenotype.</text>
</comment>
<comment type="similarity">
    <text evidence="2">Belongs to the protein kinase superfamily. Tyr protein kinase family. SRC subfamily.</text>
</comment>
<gene>
    <name type="primary">Srms</name>
    <name type="synonym">Srm</name>
</gene>
<sequence length="496" mass="55758">MEPFLRKRLTFLSFFWDKIWPADESEEDIPRIQGHDDNPVPEQAAAVEPCSFPAPRARLFRALYDFTARCAEELSVSRGDRLYALKEEGDYIFAQRLSGPPSTGLVPVTYLAKATPEPPSDQPWYFSGISRAQAQQLLLSPANAPGAFLIRPSESSIGGYSLSVRAQAKVCHYRICMAPSGSLYLQEGQLFPSLDALLAYYKTNWKLIQNPLLQPCIPQIPLVQDEWERPRSEFVLRRKLGEGFFGEVWEGLWLGSIPVAVKVIKSADMKLADLTKEIEALKSLRHERLIRLHAICSLGEPVYIVTELMGKGNLQVYLGSSEGKALSLPHLLGFACQVAEGMSYLEERRVVHRDLAARNVLVGDDLTCKVADFGLARLLKDDVYSPSSGSKIPVKWTAPEAANYRVFSQKSDVWSFGILLYEVFTYGQCPYEGMTNHETLQQISRGYRLPRPAVCPAEVYVLMVECWKGSPEERPTFAILREKLNAINRRLHLGLT</sequence>